<sequence>MSILNIVPGRLTLAELRRVSRETGLQLQLDPSSHAAIDASAATVARVLSEGRTVYGINTGFGLLASTKIAPEELELLQRSIVLSHAAGIGAPMDDSTVRLVMALKINSLARGFSGIRRQVIEALVTLFNRQIYPVIPQKGSVGASGDLAPLSHMSAVLIGEGEAFVDGVRVPGSVAMRSAGLEPITLAPKEGLALLNGTQASTAFALEGLFAAEDLYVSATVAGSLSVEAALGSRTPFDARIHEVRGHQGQIDAARLYRDLLAHSQIEQSHENCGKVQDPYSLRCQPQVMGACLTQIRQAAEVLRVEANSVSDNPLVFAGDNDILSGGNFHAEPVAFAADNLALAIAEIGSLSERRMALLIDSNLSKLPPFLVNNGGVNSGFMIAQVTSAALASENKSLAHPASVDSLPTSANQEDHVSMATFAGRRLRDMAGNTAGILAVELLAACQGIDFRAPHQSSDKLEAAKGMLREQVPFYDKDRYFAPDIEKAAALVASGRFNSLVDGEVLPSL</sequence>
<name>HUTH_CHRVO</name>
<feature type="chain" id="PRO_0000161000" description="Histidine ammonia-lyase">
    <location>
        <begin position="1"/>
        <end position="510"/>
    </location>
</feature>
<feature type="modified residue" description="2,3-didehydroalanine (Ser)" evidence="1">
    <location>
        <position position="145"/>
    </location>
</feature>
<feature type="cross-link" description="5-imidazolinone (Ala-Gly)" evidence="1">
    <location>
        <begin position="144"/>
        <end position="146"/>
    </location>
</feature>
<reference key="1">
    <citation type="journal article" date="2003" name="Proc. Natl. Acad. Sci. U.S.A.">
        <title>The complete genome sequence of Chromobacterium violaceum reveals remarkable and exploitable bacterial adaptability.</title>
        <authorList>
            <person name="Vasconcelos A.T.R."/>
            <person name="de Almeida D.F."/>
            <person name="Hungria M."/>
            <person name="Guimaraes C.T."/>
            <person name="Antonio R.V."/>
            <person name="Almeida F.C."/>
            <person name="de Almeida L.G.P."/>
            <person name="de Almeida R."/>
            <person name="Alves-Gomes J.A."/>
            <person name="Andrade E.M."/>
            <person name="Araripe J."/>
            <person name="de Araujo M.F.F."/>
            <person name="Astolfi-Filho S."/>
            <person name="Azevedo V."/>
            <person name="Baptista A.J."/>
            <person name="Bataus L.A.M."/>
            <person name="Batista J.S."/>
            <person name="Belo A."/>
            <person name="van den Berg C."/>
            <person name="Bogo M."/>
            <person name="Bonatto S."/>
            <person name="Bordignon J."/>
            <person name="Brigido M.M."/>
            <person name="Brito C.A."/>
            <person name="Brocchi M."/>
            <person name="Burity H.A."/>
            <person name="Camargo A.A."/>
            <person name="Cardoso D.D.P."/>
            <person name="Carneiro N.P."/>
            <person name="Carraro D.M."/>
            <person name="Carvalho C.M.B."/>
            <person name="Cascardo J.C.M."/>
            <person name="Cavada B.S."/>
            <person name="Chueire L.M.O."/>
            <person name="Creczynski-Pasa T.B."/>
            <person name="Cunha-Junior N.C."/>
            <person name="Fagundes N."/>
            <person name="Falcao C.L."/>
            <person name="Fantinatti F."/>
            <person name="Farias I.P."/>
            <person name="Felipe M.S.S."/>
            <person name="Ferrari L.P."/>
            <person name="Ferro J.A."/>
            <person name="Ferro M.I.T."/>
            <person name="Franco G.R."/>
            <person name="Freitas N.S.A."/>
            <person name="Furlan L.R."/>
            <person name="Gazzinelli R.T."/>
            <person name="Gomes E.A."/>
            <person name="Goncalves P.R."/>
            <person name="Grangeiro T.B."/>
            <person name="Grattapaglia D."/>
            <person name="Grisard E.C."/>
            <person name="Hanna E.S."/>
            <person name="Jardim S.N."/>
            <person name="Laurino J."/>
            <person name="Leoi L.C.T."/>
            <person name="Lima L.F.A."/>
            <person name="Loureiro M.F."/>
            <person name="Lyra M.C.C.P."/>
            <person name="Madeira H.M.F."/>
            <person name="Manfio G.P."/>
            <person name="Maranhao A.Q."/>
            <person name="Martins W.S."/>
            <person name="di Mauro S.M.Z."/>
            <person name="de Medeiros S.R.B."/>
            <person name="Meissner R.V."/>
            <person name="Moreira M.A.M."/>
            <person name="Nascimento F.F."/>
            <person name="Nicolas M.F."/>
            <person name="Oliveira J.G."/>
            <person name="Oliveira S.C."/>
            <person name="Paixao R.F.C."/>
            <person name="Parente J.A."/>
            <person name="Pedrosa F.O."/>
            <person name="Pena S.D.J."/>
            <person name="Pereira J.O."/>
            <person name="Pereira M."/>
            <person name="Pinto L.S.R.C."/>
            <person name="Pinto L.S."/>
            <person name="Porto J.I.R."/>
            <person name="Potrich D.P."/>
            <person name="Ramalho-Neto C.E."/>
            <person name="Reis A.M.M."/>
            <person name="Rigo L.U."/>
            <person name="Rondinelli E."/>
            <person name="Santos E.B.P."/>
            <person name="Santos F.R."/>
            <person name="Schneider M.P.C."/>
            <person name="Seuanez H.N."/>
            <person name="Silva A.M.R."/>
            <person name="da Silva A.L.C."/>
            <person name="Silva D.W."/>
            <person name="Silva R."/>
            <person name="Simoes I.C."/>
            <person name="Simon D."/>
            <person name="Soares C.M.A."/>
            <person name="Soares R.B.A."/>
            <person name="Souza E.M."/>
            <person name="Souza K.R.L."/>
            <person name="Souza R.C."/>
            <person name="Steffens M.B.R."/>
            <person name="Steindel M."/>
            <person name="Teixeira S.R."/>
            <person name="Urmenyi T."/>
            <person name="Vettore A."/>
            <person name="Wassem R."/>
            <person name="Zaha A."/>
            <person name="Simpson A.J.G."/>
        </authorList>
    </citation>
    <scope>NUCLEOTIDE SEQUENCE [LARGE SCALE GENOMIC DNA]</scope>
    <source>
        <strain>ATCC 12472 / DSM 30191 / JCM 1249 / CCUG 213 / NBRC 12614 / NCIMB 9131 / NCTC 9757 / MK</strain>
    </source>
</reference>
<comment type="catalytic activity">
    <reaction evidence="1">
        <text>L-histidine = trans-urocanate + NH4(+)</text>
        <dbReference type="Rhea" id="RHEA:21232"/>
        <dbReference type="ChEBI" id="CHEBI:17771"/>
        <dbReference type="ChEBI" id="CHEBI:28938"/>
        <dbReference type="ChEBI" id="CHEBI:57595"/>
        <dbReference type="EC" id="4.3.1.3"/>
    </reaction>
</comment>
<comment type="pathway">
    <text evidence="1">Amino-acid degradation; L-histidine degradation into L-glutamate; N-formimidoyl-L-glutamate from L-histidine: step 1/3.</text>
</comment>
<comment type="subcellular location">
    <subcellularLocation>
        <location evidence="1">Cytoplasm</location>
    </subcellularLocation>
</comment>
<comment type="PTM">
    <text evidence="1">Contains an active site 4-methylidene-imidazol-5-one (MIO), which is formed autocatalytically by cyclization and dehydration of residues Ala-Ser-Gly.</text>
</comment>
<comment type="similarity">
    <text evidence="1">Belongs to the PAL/histidase family.</text>
</comment>
<organism>
    <name type="scientific">Chromobacterium violaceum (strain ATCC 12472 / DSM 30191 / JCM 1249 / CCUG 213 / NBRC 12614 / NCIMB 9131 / NCTC 9757 / MK)</name>
    <dbReference type="NCBI Taxonomy" id="243365"/>
    <lineage>
        <taxon>Bacteria</taxon>
        <taxon>Pseudomonadati</taxon>
        <taxon>Pseudomonadota</taxon>
        <taxon>Betaproteobacteria</taxon>
        <taxon>Neisseriales</taxon>
        <taxon>Chromobacteriaceae</taxon>
        <taxon>Chromobacterium</taxon>
    </lineage>
</organism>
<keyword id="KW-0963">Cytoplasm</keyword>
<keyword id="KW-0369">Histidine metabolism</keyword>
<keyword id="KW-0456">Lyase</keyword>
<keyword id="KW-1185">Reference proteome</keyword>
<proteinExistence type="inferred from homology"/>
<evidence type="ECO:0000255" key="1">
    <source>
        <dbReference type="HAMAP-Rule" id="MF_00229"/>
    </source>
</evidence>
<gene>
    <name evidence="1" type="primary">hutH</name>
    <name type="ordered locus">CV_0325</name>
</gene>
<dbReference type="EC" id="4.3.1.3" evidence="1"/>
<dbReference type="EMBL" id="AE016825">
    <property type="protein sequence ID" value="AAQ58004.1"/>
    <property type="molecule type" value="Genomic_DNA"/>
</dbReference>
<dbReference type="RefSeq" id="WP_011133880.1">
    <property type="nucleotide sequence ID" value="NC_005085.1"/>
</dbReference>
<dbReference type="SMR" id="Q7P188"/>
<dbReference type="STRING" id="243365.CV_0325"/>
<dbReference type="KEGG" id="cvi:CV_0325"/>
<dbReference type="eggNOG" id="COG2986">
    <property type="taxonomic scope" value="Bacteria"/>
</dbReference>
<dbReference type="HOGENOM" id="CLU_014801_4_0_4"/>
<dbReference type="OrthoDB" id="9806955at2"/>
<dbReference type="UniPathway" id="UPA00379">
    <property type="reaction ID" value="UER00549"/>
</dbReference>
<dbReference type="Proteomes" id="UP000001424">
    <property type="component" value="Chromosome"/>
</dbReference>
<dbReference type="GO" id="GO:0005737">
    <property type="term" value="C:cytoplasm"/>
    <property type="evidence" value="ECO:0007669"/>
    <property type="project" value="UniProtKB-SubCell"/>
</dbReference>
<dbReference type="GO" id="GO:0004397">
    <property type="term" value="F:histidine ammonia-lyase activity"/>
    <property type="evidence" value="ECO:0007669"/>
    <property type="project" value="UniProtKB-UniRule"/>
</dbReference>
<dbReference type="GO" id="GO:0019556">
    <property type="term" value="P:L-histidine catabolic process to glutamate and formamide"/>
    <property type="evidence" value="ECO:0007669"/>
    <property type="project" value="UniProtKB-UniPathway"/>
</dbReference>
<dbReference type="GO" id="GO:0019557">
    <property type="term" value="P:L-histidine catabolic process to glutamate and formate"/>
    <property type="evidence" value="ECO:0007669"/>
    <property type="project" value="UniProtKB-UniPathway"/>
</dbReference>
<dbReference type="CDD" id="cd00332">
    <property type="entry name" value="PAL-HAL"/>
    <property type="match status" value="1"/>
</dbReference>
<dbReference type="FunFam" id="1.10.275.10:FF:000005">
    <property type="entry name" value="Histidine ammonia-lyase"/>
    <property type="match status" value="1"/>
</dbReference>
<dbReference type="FunFam" id="1.20.200.10:FF:000003">
    <property type="entry name" value="Histidine ammonia-lyase"/>
    <property type="match status" value="1"/>
</dbReference>
<dbReference type="Gene3D" id="1.20.200.10">
    <property type="entry name" value="Fumarase/aspartase (Central domain)"/>
    <property type="match status" value="1"/>
</dbReference>
<dbReference type="Gene3D" id="1.10.275.10">
    <property type="entry name" value="Fumarase/aspartase (N-terminal domain)"/>
    <property type="match status" value="1"/>
</dbReference>
<dbReference type="HAMAP" id="MF_00229">
    <property type="entry name" value="His_ammonia_lyase"/>
    <property type="match status" value="1"/>
</dbReference>
<dbReference type="InterPro" id="IPR001106">
    <property type="entry name" value="Aromatic_Lyase"/>
</dbReference>
<dbReference type="InterPro" id="IPR024083">
    <property type="entry name" value="Fumarase/histidase_N"/>
</dbReference>
<dbReference type="InterPro" id="IPR005921">
    <property type="entry name" value="HutH"/>
</dbReference>
<dbReference type="InterPro" id="IPR008948">
    <property type="entry name" value="L-Aspartase-like"/>
</dbReference>
<dbReference type="InterPro" id="IPR022313">
    <property type="entry name" value="Phe/His_NH3-lyase_AS"/>
</dbReference>
<dbReference type="NCBIfam" id="TIGR01225">
    <property type="entry name" value="hutH"/>
    <property type="match status" value="1"/>
</dbReference>
<dbReference type="NCBIfam" id="NF006871">
    <property type="entry name" value="PRK09367.1"/>
    <property type="match status" value="1"/>
</dbReference>
<dbReference type="PANTHER" id="PTHR10362">
    <property type="entry name" value="HISTIDINE AMMONIA-LYASE"/>
    <property type="match status" value="1"/>
</dbReference>
<dbReference type="Pfam" id="PF00221">
    <property type="entry name" value="Lyase_aromatic"/>
    <property type="match status" value="1"/>
</dbReference>
<dbReference type="SUPFAM" id="SSF48557">
    <property type="entry name" value="L-aspartase-like"/>
    <property type="match status" value="1"/>
</dbReference>
<dbReference type="PROSITE" id="PS00488">
    <property type="entry name" value="PAL_HISTIDASE"/>
    <property type="match status" value="1"/>
</dbReference>
<accession>Q7P188</accession>
<protein>
    <recommendedName>
        <fullName evidence="1">Histidine ammonia-lyase</fullName>
        <shortName evidence="1">Histidase</shortName>
        <ecNumber evidence="1">4.3.1.3</ecNumber>
    </recommendedName>
</protein>